<accession>Q3E7X9</accession>
<accession>D6W2M5</accession>
<accession>P02380</accession>
<keyword id="KW-0002">3D-structure</keyword>
<keyword id="KW-0007">Acetylation</keyword>
<keyword id="KW-0963">Cytoplasm</keyword>
<keyword id="KW-1185">Reference proteome</keyword>
<keyword id="KW-0687">Ribonucleoprotein</keyword>
<keyword id="KW-0689">Ribosomal protein</keyword>
<dbReference type="EMBL" id="X00128">
    <property type="protein sequence ID" value="CAA24958.1"/>
    <property type="molecule type" value="Genomic_DNA"/>
</dbReference>
<dbReference type="EMBL" id="U55021">
    <property type="protein sequence ID" value="AAB47414.1"/>
    <property type="molecule type" value="Genomic_DNA"/>
</dbReference>
<dbReference type="EMBL" id="Z75075">
    <property type="protein sequence ID" value="CAA99373.1"/>
    <property type="molecule type" value="Genomic_DNA"/>
</dbReference>
<dbReference type="EMBL" id="AY692746">
    <property type="protein sequence ID" value="AAT92765.1"/>
    <property type="molecule type" value="Genomic_DNA"/>
</dbReference>
<dbReference type="EMBL" id="BK006948">
    <property type="protein sequence ID" value="DAA10941.1"/>
    <property type="molecule type" value="Genomic_DNA"/>
</dbReference>
<dbReference type="PIR" id="A02750">
    <property type="entry name" value="R3BY33"/>
</dbReference>
<dbReference type="RefSeq" id="NP_014810.1">
    <property type="nucleotide sequence ID" value="NM_001183586.1"/>
</dbReference>
<dbReference type="PDB" id="3J6X">
    <property type="method" value="EM"/>
    <property type="resolution" value="6.10 A"/>
    <property type="chains" value="28=1-67"/>
</dbReference>
<dbReference type="PDB" id="3J6Y">
    <property type="method" value="EM"/>
    <property type="resolution" value="6.10 A"/>
    <property type="chains" value="28=1-67"/>
</dbReference>
<dbReference type="PDB" id="3J77">
    <property type="method" value="EM"/>
    <property type="resolution" value="6.20 A"/>
    <property type="chains" value="28=1-67"/>
</dbReference>
<dbReference type="PDB" id="3J78">
    <property type="method" value="EM"/>
    <property type="resolution" value="6.30 A"/>
    <property type="chains" value="28=1-67"/>
</dbReference>
<dbReference type="PDB" id="4U3M">
    <property type="method" value="X-ray"/>
    <property type="resolution" value="3.00 A"/>
    <property type="chains" value="D8/d8=2-67"/>
</dbReference>
<dbReference type="PDB" id="4U3N">
    <property type="method" value="X-ray"/>
    <property type="resolution" value="3.20 A"/>
    <property type="chains" value="D8/d8=2-67"/>
</dbReference>
<dbReference type="PDB" id="4U3U">
    <property type="method" value="X-ray"/>
    <property type="resolution" value="2.90 A"/>
    <property type="chains" value="D8/d8=2-67"/>
</dbReference>
<dbReference type="PDB" id="4U4N">
    <property type="method" value="X-ray"/>
    <property type="resolution" value="3.10 A"/>
    <property type="chains" value="D8/d8=2-67"/>
</dbReference>
<dbReference type="PDB" id="4U4O">
    <property type="method" value="X-ray"/>
    <property type="resolution" value="3.60 A"/>
    <property type="chains" value="D8/d8=2-67"/>
</dbReference>
<dbReference type="PDB" id="4U4Q">
    <property type="method" value="X-ray"/>
    <property type="resolution" value="3.00 A"/>
    <property type="chains" value="D8/d8=2-67"/>
</dbReference>
<dbReference type="PDB" id="4U4R">
    <property type="method" value="X-ray"/>
    <property type="resolution" value="2.80 A"/>
    <property type="chains" value="D8/d8=2-67"/>
</dbReference>
<dbReference type="PDB" id="4U4U">
    <property type="method" value="X-ray"/>
    <property type="resolution" value="3.00 A"/>
    <property type="chains" value="D8/d8=2-67"/>
</dbReference>
<dbReference type="PDB" id="4U4Y">
    <property type="method" value="X-ray"/>
    <property type="resolution" value="3.20 A"/>
    <property type="chains" value="D8/d8=2-67"/>
</dbReference>
<dbReference type="PDB" id="4U4Z">
    <property type="method" value="X-ray"/>
    <property type="resolution" value="3.10 A"/>
    <property type="chains" value="D8/d8=2-67"/>
</dbReference>
<dbReference type="PDB" id="4U50">
    <property type="method" value="X-ray"/>
    <property type="resolution" value="3.20 A"/>
    <property type="chains" value="D8/d8=2-67"/>
</dbReference>
<dbReference type="PDB" id="4U51">
    <property type="method" value="X-ray"/>
    <property type="resolution" value="3.20 A"/>
    <property type="chains" value="D8/d8=2-67"/>
</dbReference>
<dbReference type="PDB" id="4U52">
    <property type="method" value="X-ray"/>
    <property type="resolution" value="3.00 A"/>
    <property type="chains" value="D8/d8=2-67"/>
</dbReference>
<dbReference type="PDB" id="4U53">
    <property type="method" value="X-ray"/>
    <property type="resolution" value="3.30 A"/>
    <property type="chains" value="D8/d8=2-67"/>
</dbReference>
<dbReference type="PDB" id="4U55">
    <property type="method" value="X-ray"/>
    <property type="resolution" value="3.20 A"/>
    <property type="chains" value="D8/d8=2-67"/>
</dbReference>
<dbReference type="PDB" id="4U56">
    <property type="method" value="X-ray"/>
    <property type="resolution" value="3.45 A"/>
    <property type="chains" value="D8/d8=2-67"/>
</dbReference>
<dbReference type="PDB" id="4U6F">
    <property type="method" value="X-ray"/>
    <property type="resolution" value="3.10 A"/>
    <property type="chains" value="D8/d8=2-67"/>
</dbReference>
<dbReference type="PDB" id="4V6I">
    <property type="method" value="EM"/>
    <property type="resolution" value="8.80 A"/>
    <property type="chains" value="AY=1-67"/>
</dbReference>
<dbReference type="PDB" id="4V7R">
    <property type="method" value="X-ray"/>
    <property type="resolution" value="4.00 A"/>
    <property type="chains" value="AR/CR=1-67"/>
</dbReference>
<dbReference type="PDB" id="4V88">
    <property type="method" value="X-ray"/>
    <property type="resolution" value="3.00 A"/>
    <property type="chains" value="Ac/Cc=1-67"/>
</dbReference>
<dbReference type="PDB" id="4V8Y">
    <property type="method" value="EM"/>
    <property type="resolution" value="4.30 A"/>
    <property type="chains" value="A2=1-67"/>
</dbReference>
<dbReference type="PDB" id="4V8Z">
    <property type="method" value="EM"/>
    <property type="resolution" value="6.60 A"/>
    <property type="chains" value="A2=1-67"/>
</dbReference>
<dbReference type="PDB" id="4V92">
    <property type="method" value="EM"/>
    <property type="resolution" value="3.70 A"/>
    <property type="chains" value="c=5-67"/>
</dbReference>
<dbReference type="PDB" id="5DAT">
    <property type="method" value="X-ray"/>
    <property type="resolution" value="3.15 A"/>
    <property type="chains" value="D8/d8=2-67"/>
</dbReference>
<dbReference type="PDB" id="5DC3">
    <property type="method" value="X-ray"/>
    <property type="resolution" value="3.25 A"/>
    <property type="chains" value="D8/d8=2-67"/>
</dbReference>
<dbReference type="PDB" id="5DGE">
    <property type="method" value="X-ray"/>
    <property type="resolution" value="3.45 A"/>
    <property type="chains" value="D8/d8=2-67"/>
</dbReference>
<dbReference type="PDB" id="5DGF">
    <property type="method" value="X-ray"/>
    <property type="resolution" value="3.30 A"/>
    <property type="chains" value="D8/d8=2-67"/>
</dbReference>
<dbReference type="PDB" id="5DGV">
    <property type="method" value="X-ray"/>
    <property type="resolution" value="3.10 A"/>
    <property type="chains" value="D8/d8=2-67"/>
</dbReference>
<dbReference type="PDB" id="5FCI">
    <property type="method" value="X-ray"/>
    <property type="resolution" value="3.40 A"/>
    <property type="chains" value="D8/d8=2-67"/>
</dbReference>
<dbReference type="PDB" id="5FCJ">
    <property type="method" value="X-ray"/>
    <property type="resolution" value="3.10 A"/>
    <property type="chains" value="D8/d8=2-67"/>
</dbReference>
<dbReference type="PDB" id="5I4L">
    <property type="method" value="X-ray"/>
    <property type="resolution" value="3.10 A"/>
    <property type="chains" value="D8/d8=5-67"/>
</dbReference>
<dbReference type="PDB" id="5JPQ">
    <property type="method" value="EM"/>
    <property type="resolution" value="7.30 A"/>
    <property type="chains" value="1=1-67"/>
</dbReference>
<dbReference type="PDB" id="5JUO">
    <property type="method" value="EM"/>
    <property type="resolution" value="4.00 A"/>
    <property type="chains" value="ZB=1-67"/>
</dbReference>
<dbReference type="PDB" id="5JUP">
    <property type="method" value="EM"/>
    <property type="resolution" value="3.50 A"/>
    <property type="chains" value="ZB=1-67"/>
</dbReference>
<dbReference type="PDB" id="5JUS">
    <property type="method" value="EM"/>
    <property type="resolution" value="4.20 A"/>
    <property type="chains" value="ZB=1-67"/>
</dbReference>
<dbReference type="PDB" id="5JUT">
    <property type="method" value="EM"/>
    <property type="resolution" value="4.00 A"/>
    <property type="chains" value="ZB=1-67"/>
</dbReference>
<dbReference type="PDB" id="5JUU">
    <property type="method" value="EM"/>
    <property type="resolution" value="4.00 A"/>
    <property type="chains" value="ZB=1-67"/>
</dbReference>
<dbReference type="PDB" id="5LYB">
    <property type="method" value="X-ray"/>
    <property type="resolution" value="3.25 A"/>
    <property type="chains" value="D8/d8=5-67"/>
</dbReference>
<dbReference type="PDB" id="5MEI">
    <property type="method" value="X-ray"/>
    <property type="resolution" value="3.50 A"/>
    <property type="chains" value="d/d8=5-67"/>
</dbReference>
<dbReference type="PDB" id="5NDG">
    <property type="method" value="X-ray"/>
    <property type="resolution" value="3.70 A"/>
    <property type="chains" value="D8/d8=5-67"/>
</dbReference>
<dbReference type="PDB" id="5NDV">
    <property type="method" value="X-ray"/>
    <property type="resolution" value="3.30 A"/>
    <property type="chains" value="D8/d8=5-67"/>
</dbReference>
<dbReference type="PDB" id="5NDW">
    <property type="method" value="X-ray"/>
    <property type="resolution" value="3.70 A"/>
    <property type="chains" value="D8/d8=5-67"/>
</dbReference>
<dbReference type="PDB" id="5OBM">
    <property type="method" value="X-ray"/>
    <property type="resolution" value="3.40 A"/>
    <property type="chains" value="D8/d8=5-67"/>
</dbReference>
<dbReference type="PDB" id="5ON6">
    <property type="method" value="X-ray"/>
    <property type="resolution" value="3.10 A"/>
    <property type="chains" value="d/d8=5-67"/>
</dbReference>
<dbReference type="PDB" id="5TBW">
    <property type="method" value="X-ray"/>
    <property type="resolution" value="3.00 A"/>
    <property type="chains" value="d/d8=5-67"/>
</dbReference>
<dbReference type="PDB" id="5TGA">
    <property type="method" value="X-ray"/>
    <property type="resolution" value="3.30 A"/>
    <property type="chains" value="D8/d8=5-67"/>
</dbReference>
<dbReference type="PDB" id="5TGM">
    <property type="method" value="X-ray"/>
    <property type="resolution" value="3.50 A"/>
    <property type="chains" value="D8/d8=5-67"/>
</dbReference>
<dbReference type="PDB" id="5TZS">
    <property type="method" value="EM"/>
    <property type="resolution" value="5.10 A"/>
    <property type="chains" value="G=1-67"/>
</dbReference>
<dbReference type="PDB" id="5WLC">
    <property type="method" value="EM"/>
    <property type="resolution" value="3.80 A"/>
    <property type="chains" value="LG=1-67"/>
</dbReference>
<dbReference type="PDB" id="5WYJ">
    <property type="method" value="EM"/>
    <property type="resolution" value="8.70 A"/>
    <property type="chains" value="Sd=1-67"/>
</dbReference>
<dbReference type="PDB" id="5WYK">
    <property type="method" value="EM"/>
    <property type="resolution" value="4.50 A"/>
    <property type="chains" value="Sd=1-67"/>
</dbReference>
<dbReference type="PDB" id="6FAI">
    <property type="method" value="EM"/>
    <property type="resolution" value="3.40 A"/>
    <property type="chains" value="c=1-67"/>
</dbReference>
<dbReference type="PDB" id="6GQ1">
    <property type="method" value="EM"/>
    <property type="resolution" value="4.40 A"/>
    <property type="chains" value="AS=5-67"/>
</dbReference>
<dbReference type="PDB" id="6GQB">
    <property type="method" value="EM"/>
    <property type="resolution" value="3.90 A"/>
    <property type="chains" value="AS=5-67"/>
</dbReference>
<dbReference type="PDB" id="6GQV">
    <property type="method" value="EM"/>
    <property type="resolution" value="4.00 A"/>
    <property type="chains" value="AS=5-67"/>
</dbReference>
<dbReference type="PDB" id="6HHQ">
    <property type="method" value="X-ray"/>
    <property type="resolution" value="3.10 A"/>
    <property type="chains" value="d/d8=1-67"/>
</dbReference>
<dbReference type="PDB" id="6I7O">
    <property type="method" value="EM"/>
    <property type="resolution" value="5.30 A"/>
    <property type="chains" value="L/Lb=5-67"/>
</dbReference>
<dbReference type="PDB" id="6KE6">
    <property type="method" value="EM"/>
    <property type="resolution" value="3.40 A"/>
    <property type="chains" value="Sd=1-67"/>
</dbReference>
<dbReference type="PDB" id="6LQP">
    <property type="method" value="EM"/>
    <property type="resolution" value="3.20 A"/>
    <property type="chains" value="Sd=1-67"/>
</dbReference>
<dbReference type="PDB" id="6LQQ">
    <property type="method" value="EM"/>
    <property type="resolution" value="4.10 A"/>
    <property type="chains" value="Sd=1-67"/>
</dbReference>
<dbReference type="PDB" id="6LQR">
    <property type="method" value="EM"/>
    <property type="resolution" value="8.60 A"/>
    <property type="chains" value="Sd=1-67"/>
</dbReference>
<dbReference type="PDB" id="6LQS">
    <property type="method" value="EM"/>
    <property type="resolution" value="3.80 A"/>
    <property type="chains" value="Sd=1-67"/>
</dbReference>
<dbReference type="PDB" id="6LQT">
    <property type="method" value="EM"/>
    <property type="resolution" value="4.90 A"/>
    <property type="chains" value="Sd=1-67"/>
</dbReference>
<dbReference type="PDB" id="6LQU">
    <property type="method" value="EM"/>
    <property type="resolution" value="3.70 A"/>
    <property type="chains" value="Sd=1-67"/>
</dbReference>
<dbReference type="PDB" id="6LQV">
    <property type="method" value="EM"/>
    <property type="resolution" value="4.80 A"/>
    <property type="chains" value="Sd=1-67"/>
</dbReference>
<dbReference type="PDB" id="6Q8Y">
    <property type="method" value="EM"/>
    <property type="resolution" value="3.10 A"/>
    <property type="chains" value="L=5-67"/>
</dbReference>
<dbReference type="PDB" id="6RBD">
    <property type="method" value="EM"/>
    <property type="resolution" value="3.47 A"/>
    <property type="chains" value="c=1-67"/>
</dbReference>
<dbReference type="PDB" id="6RBE">
    <property type="method" value="EM"/>
    <property type="resolution" value="3.80 A"/>
    <property type="chains" value="c=1-67"/>
</dbReference>
<dbReference type="PDB" id="6S47">
    <property type="method" value="EM"/>
    <property type="resolution" value="3.28 A"/>
    <property type="chains" value="Bd=2-67"/>
</dbReference>
<dbReference type="PDB" id="6T4Q">
    <property type="method" value="EM"/>
    <property type="resolution" value="2.60 A"/>
    <property type="chains" value="Sc=5-67"/>
</dbReference>
<dbReference type="PDB" id="6TB3">
    <property type="method" value="EM"/>
    <property type="resolution" value="2.80 A"/>
    <property type="chains" value="L=5-67"/>
</dbReference>
<dbReference type="PDB" id="6TNU">
    <property type="method" value="EM"/>
    <property type="resolution" value="3.10 A"/>
    <property type="chains" value="L=5-67"/>
</dbReference>
<dbReference type="PDB" id="6WDR">
    <property type="method" value="EM"/>
    <property type="resolution" value="3.70 A"/>
    <property type="chains" value="c=5-67"/>
</dbReference>
<dbReference type="PDB" id="6WOO">
    <property type="method" value="EM"/>
    <property type="resolution" value="2.90 A"/>
    <property type="chains" value="cc=5-67"/>
</dbReference>
<dbReference type="PDB" id="6Y7C">
    <property type="method" value="EM"/>
    <property type="resolution" value="3.80 A"/>
    <property type="chains" value="c=1-67"/>
</dbReference>
<dbReference type="PDB" id="6Z6J">
    <property type="method" value="EM"/>
    <property type="resolution" value="3.40 A"/>
    <property type="chains" value="Sc=1-67"/>
</dbReference>
<dbReference type="PDB" id="6Z6K">
    <property type="method" value="EM"/>
    <property type="resolution" value="3.40 A"/>
    <property type="chains" value="Sc=1-67"/>
</dbReference>
<dbReference type="PDB" id="6ZQA">
    <property type="method" value="EM"/>
    <property type="resolution" value="4.40 A"/>
    <property type="chains" value="Dc=1-67"/>
</dbReference>
<dbReference type="PDB" id="6ZQB">
    <property type="method" value="EM"/>
    <property type="resolution" value="3.90 A"/>
    <property type="chains" value="Dc=1-67"/>
</dbReference>
<dbReference type="PDB" id="6ZQC">
    <property type="method" value="EM"/>
    <property type="resolution" value="3.80 A"/>
    <property type="chains" value="Dc=1-67"/>
</dbReference>
<dbReference type="PDB" id="6ZQD">
    <property type="method" value="EM"/>
    <property type="resolution" value="3.80 A"/>
    <property type="chains" value="Dc=1-67"/>
</dbReference>
<dbReference type="PDB" id="6ZQE">
    <property type="method" value="EM"/>
    <property type="resolution" value="7.10 A"/>
    <property type="chains" value="Dc=1-67"/>
</dbReference>
<dbReference type="PDB" id="6ZQF">
    <property type="method" value="EM"/>
    <property type="resolution" value="4.90 A"/>
    <property type="chains" value="Dc=1-67"/>
</dbReference>
<dbReference type="PDB" id="6ZQG">
    <property type="method" value="EM"/>
    <property type="resolution" value="3.50 A"/>
    <property type="chains" value="Dc=1-67"/>
</dbReference>
<dbReference type="PDB" id="6ZVI">
    <property type="method" value="EM"/>
    <property type="resolution" value="3.00 A"/>
    <property type="chains" value="N=5-67"/>
</dbReference>
<dbReference type="PDB" id="7A1G">
    <property type="method" value="EM"/>
    <property type="resolution" value="3.00 A"/>
    <property type="chains" value="h=5-67"/>
</dbReference>
<dbReference type="PDB" id="7AJT">
    <property type="method" value="EM"/>
    <property type="resolution" value="4.60 A"/>
    <property type="chains" value="Dc=1-67"/>
</dbReference>
<dbReference type="PDB" id="7AJU">
    <property type="method" value="EM"/>
    <property type="resolution" value="3.80 A"/>
    <property type="chains" value="Dc=1-67"/>
</dbReference>
<dbReference type="PDB" id="7B7D">
    <property type="method" value="EM"/>
    <property type="resolution" value="3.30 A"/>
    <property type="chains" value="L=5-67"/>
</dbReference>
<dbReference type="PDB" id="7D4I">
    <property type="method" value="EM"/>
    <property type="resolution" value="4.00 A"/>
    <property type="chains" value="Sd=1-67"/>
</dbReference>
<dbReference type="PDB" id="7D5S">
    <property type="method" value="EM"/>
    <property type="resolution" value="4.60 A"/>
    <property type="chains" value="Sd=1-67"/>
</dbReference>
<dbReference type="PDB" id="7D5T">
    <property type="method" value="EM"/>
    <property type="resolution" value="6.00 A"/>
    <property type="chains" value="Sd=1-67"/>
</dbReference>
<dbReference type="PDB" id="7D63">
    <property type="method" value="EM"/>
    <property type="resolution" value="12.30 A"/>
    <property type="chains" value="Sd=1-67"/>
</dbReference>
<dbReference type="PDB" id="7MPI">
    <property type="method" value="EM"/>
    <property type="resolution" value="3.05 A"/>
    <property type="chains" value="Bc=5-67"/>
</dbReference>
<dbReference type="PDB" id="7MPJ">
    <property type="method" value="EM"/>
    <property type="resolution" value="2.70 A"/>
    <property type="chains" value="Bc=5-67"/>
</dbReference>
<dbReference type="PDB" id="7N8B">
    <property type="method" value="EM"/>
    <property type="resolution" value="3.05 A"/>
    <property type="chains" value="Bc=5-67"/>
</dbReference>
<dbReference type="PDB" id="7NRC">
    <property type="method" value="EM"/>
    <property type="resolution" value="3.90 A"/>
    <property type="chains" value="SL=5-67"/>
</dbReference>
<dbReference type="PDB" id="7NRD">
    <property type="method" value="EM"/>
    <property type="resolution" value="4.36 A"/>
    <property type="chains" value="SL=5-67"/>
</dbReference>
<dbReference type="PDB" id="7SUK">
    <property type="method" value="EM"/>
    <property type="resolution" value="3.99 A"/>
    <property type="chains" value="LG=5-67"/>
</dbReference>
<dbReference type="PDB" id="7ZPQ">
    <property type="method" value="EM"/>
    <property type="resolution" value="3.47 A"/>
    <property type="chains" value="Ac=5-67"/>
</dbReference>
<dbReference type="PDB" id="7ZRS">
    <property type="method" value="EM"/>
    <property type="resolution" value="4.80 A"/>
    <property type="chains" value="Ac=5-67"/>
</dbReference>
<dbReference type="PDB" id="7ZUW">
    <property type="method" value="EM"/>
    <property type="resolution" value="4.30 A"/>
    <property type="chains" value="Ac=5-67"/>
</dbReference>
<dbReference type="PDB" id="7ZUX">
    <property type="method" value="EM"/>
    <property type="resolution" value="2.50 A"/>
    <property type="chains" value="Dc=5-67"/>
</dbReference>
<dbReference type="PDB" id="7ZW0">
    <property type="method" value="EM"/>
    <property type="resolution" value="2.40 A"/>
    <property type="chains" value="sL=1-67"/>
</dbReference>
<dbReference type="PDB" id="8BN3">
    <property type="method" value="EM"/>
    <property type="resolution" value="2.40 A"/>
    <property type="chains" value="D8=5-67"/>
</dbReference>
<dbReference type="PDB" id="8BQD">
    <property type="method" value="EM"/>
    <property type="resolution" value="3.90 A"/>
    <property type="chains" value="L=5-67"/>
</dbReference>
<dbReference type="PDB" id="8BQX">
    <property type="method" value="EM"/>
    <property type="resolution" value="3.80 A"/>
    <property type="chains" value="L=5-67"/>
</dbReference>
<dbReference type="PDB" id="8C00">
    <property type="method" value="EM"/>
    <property type="resolution" value="2.90 A"/>
    <property type="chains" value="L=1-67"/>
</dbReference>
<dbReference type="PDB" id="8C01">
    <property type="method" value="EM"/>
    <property type="resolution" value="2.70 A"/>
    <property type="chains" value="L=1-67"/>
</dbReference>
<dbReference type="PDB" id="8CAH">
    <property type="method" value="EM"/>
    <property type="resolution" value="3.00 A"/>
    <property type="chains" value="h=1-67"/>
</dbReference>
<dbReference type="PDB" id="8CAS">
    <property type="method" value="EM"/>
    <property type="resolution" value="3.30 A"/>
    <property type="chains" value="i=1-67"/>
</dbReference>
<dbReference type="PDB" id="8CBJ">
    <property type="method" value="EM"/>
    <property type="resolution" value="3.80 A"/>
    <property type="chains" value="c=1-67"/>
</dbReference>
<dbReference type="PDB" id="8CCS">
    <property type="method" value="EM"/>
    <property type="resolution" value="1.97 A"/>
    <property type="chains" value="4=1-67"/>
</dbReference>
<dbReference type="PDB" id="8CDL">
    <property type="method" value="EM"/>
    <property type="resolution" value="2.72 A"/>
    <property type="chains" value="4=1-67"/>
</dbReference>
<dbReference type="PDB" id="8CDR">
    <property type="method" value="EM"/>
    <property type="resolution" value="2.04 A"/>
    <property type="chains" value="4=1-67"/>
</dbReference>
<dbReference type="PDB" id="8CEH">
    <property type="method" value="EM"/>
    <property type="resolution" value="2.05 A"/>
    <property type="chains" value="4=1-67"/>
</dbReference>
<dbReference type="PDB" id="8CF5">
    <property type="method" value="EM"/>
    <property type="resolution" value="2.71 A"/>
    <property type="chains" value="4=1-67"/>
</dbReference>
<dbReference type="PDB" id="8CG8">
    <property type="method" value="EM"/>
    <property type="resolution" value="2.57 A"/>
    <property type="chains" value="4=1-67"/>
</dbReference>
<dbReference type="PDB" id="8CGN">
    <property type="method" value="EM"/>
    <property type="resolution" value="2.28 A"/>
    <property type="chains" value="4=1-67"/>
</dbReference>
<dbReference type="PDB" id="8CIV">
    <property type="method" value="EM"/>
    <property type="resolution" value="2.47 A"/>
    <property type="chains" value="4=1-67"/>
</dbReference>
<dbReference type="PDB" id="8CKU">
    <property type="method" value="EM"/>
    <property type="resolution" value="3.11 A"/>
    <property type="chains" value="4=1-67"/>
</dbReference>
<dbReference type="PDB" id="8CMJ">
    <property type="method" value="EM"/>
    <property type="resolution" value="3.79 A"/>
    <property type="chains" value="4=1-67"/>
</dbReference>
<dbReference type="PDB" id="8K2D">
    <property type="method" value="EM"/>
    <property type="resolution" value="3.20 A"/>
    <property type="chains" value="Sc=1-67"/>
</dbReference>
<dbReference type="PDB" id="8K82">
    <property type="method" value="EM"/>
    <property type="resolution" value="3.00 A"/>
    <property type="chains" value="Sc=1-67"/>
</dbReference>
<dbReference type="PDB" id="8P4V">
    <property type="method" value="X-ray"/>
    <property type="resolution" value="3.16 A"/>
    <property type="chains" value="d/d8=1-67"/>
</dbReference>
<dbReference type="PDB" id="8P9A">
    <property type="method" value="X-ray"/>
    <property type="resolution" value="2.90 A"/>
    <property type="chains" value="d/d8=1-67"/>
</dbReference>
<dbReference type="PDB" id="8T2X">
    <property type="method" value="EM"/>
    <property type="resolution" value="2.46 A"/>
    <property type="chains" value="Bc=1-67"/>
</dbReference>
<dbReference type="PDB" id="8T2Y">
    <property type="method" value="EM"/>
    <property type="resolution" value="2.20 A"/>
    <property type="chains" value="Bc=1-67"/>
</dbReference>
<dbReference type="PDB" id="8T2Z">
    <property type="method" value="EM"/>
    <property type="resolution" value="2.40 A"/>
    <property type="chains" value="Bc=1-67"/>
</dbReference>
<dbReference type="PDB" id="8T30">
    <property type="method" value="EM"/>
    <property type="resolution" value="2.88 A"/>
    <property type="chains" value="Bc=1-67"/>
</dbReference>
<dbReference type="PDB" id="8T3A">
    <property type="method" value="EM"/>
    <property type="resolution" value="2.86 A"/>
    <property type="chains" value="Bc=1-67"/>
</dbReference>
<dbReference type="PDB" id="8T3B">
    <property type="method" value="EM"/>
    <property type="resolution" value="3.08 A"/>
    <property type="chains" value="Bc=1-67"/>
</dbReference>
<dbReference type="PDB" id="8T3C">
    <property type="method" value="EM"/>
    <property type="resolution" value="3.86 A"/>
    <property type="chains" value="Bc=1-67"/>
</dbReference>
<dbReference type="PDB" id="8T3D">
    <property type="method" value="EM"/>
    <property type="resolution" value="2.95 A"/>
    <property type="chains" value="Bc=1-67"/>
</dbReference>
<dbReference type="PDB" id="8T3E">
    <property type="method" value="EM"/>
    <property type="resolution" value="3.04 A"/>
    <property type="chains" value="Bc=1-67"/>
</dbReference>
<dbReference type="PDB" id="8T3F">
    <property type="method" value="EM"/>
    <property type="resolution" value="3.09 A"/>
    <property type="chains" value="Bc=1-67"/>
</dbReference>
<dbReference type="PDB" id="8UT0">
    <property type="method" value="EM"/>
    <property type="resolution" value="3.22 A"/>
    <property type="chains" value="SL=5-67"/>
</dbReference>
<dbReference type="PDB" id="8UTI">
    <property type="method" value="EM"/>
    <property type="resolution" value="3.13 A"/>
    <property type="chains" value="SL=5-67"/>
</dbReference>
<dbReference type="PDB" id="8XU8">
    <property type="method" value="EM"/>
    <property type="resolution" value="3.40 A"/>
    <property type="chains" value="SL=5-67"/>
</dbReference>
<dbReference type="PDB" id="8Y0U">
    <property type="method" value="EM"/>
    <property type="resolution" value="3.59 A"/>
    <property type="chains" value="Sc=1-67"/>
</dbReference>
<dbReference type="PDB" id="8YLD">
    <property type="method" value="EM"/>
    <property type="resolution" value="3.90 A"/>
    <property type="chains" value="SL=5-67"/>
</dbReference>
<dbReference type="PDB" id="8YLR">
    <property type="method" value="EM"/>
    <property type="resolution" value="3.90 A"/>
    <property type="chains" value="SL=5-67"/>
</dbReference>
<dbReference type="PDB" id="8Z70">
    <property type="method" value="EM"/>
    <property type="resolution" value="3.20 A"/>
    <property type="chains" value="SL=5-67"/>
</dbReference>
<dbReference type="PDB" id="8Z71">
    <property type="method" value="EM"/>
    <property type="resolution" value="3.60 A"/>
    <property type="chains" value="SL=5-67"/>
</dbReference>
<dbReference type="PDB" id="9F9S">
    <property type="method" value="EM"/>
    <property type="resolution" value="2.90 A"/>
    <property type="chains" value="RC=1-67"/>
</dbReference>
<dbReference type="PDBsum" id="3J6X"/>
<dbReference type="PDBsum" id="3J6Y"/>
<dbReference type="PDBsum" id="3J77"/>
<dbReference type="PDBsum" id="3J78"/>
<dbReference type="PDBsum" id="4U3M"/>
<dbReference type="PDBsum" id="4U3N"/>
<dbReference type="PDBsum" id="4U3U"/>
<dbReference type="PDBsum" id="4U4N"/>
<dbReference type="PDBsum" id="4U4O"/>
<dbReference type="PDBsum" id="4U4Q"/>
<dbReference type="PDBsum" id="4U4R"/>
<dbReference type="PDBsum" id="4U4U"/>
<dbReference type="PDBsum" id="4U4Y"/>
<dbReference type="PDBsum" id="4U4Z"/>
<dbReference type="PDBsum" id="4U50"/>
<dbReference type="PDBsum" id="4U51"/>
<dbReference type="PDBsum" id="4U52"/>
<dbReference type="PDBsum" id="4U53"/>
<dbReference type="PDBsum" id="4U55"/>
<dbReference type="PDBsum" id="4U56"/>
<dbReference type="PDBsum" id="4U6F"/>
<dbReference type="PDBsum" id="4V6I"/>
<dbReference type="PDBsum" id="4V7R"/>
<dbReference type="PDBsum" id="4V88"/>
<dbReference type="PDBsum" id="4V8Y"/>
<dbReference type="PDBsum" id="4V8Z"/>
<dbReference type="PDBsum" id="4V92"/>
<dbReference type="PDBsum" id="5DAT"/>
<dbReference type="PDBsum" id="5DC3"/>
<dbReference type="PDBsum" id="5DGE"/>
<dbReference type="PDBsum" id="5DGF"/>
<dbReference type="PDBsum" id="5DGV"/>
<dbReference type="PDBsum" id="5FCI"/>
<dbReference type="PDBsum" id="5FCJ"/>
<dbReference type="PDBsum" id="5I4L"/>
<dbReference type="PDBsum" id="5JPQ"/>
<dbReference type="PDBsum" id="5JUO"/>
<dbReference type="PDBsum" id="5JUP"/>
<dbReference type="PDBsum" id="5JUS"/>
<dbReference type="PDBsum" id="5JUT"/>
<dbReference type="PDBsum" id="5JUU"/>
<dbReference type="PDBsum" id="5LYB"/>
<dbReference type="PDBsum" id="5MEI"/>
<dbReference type="PDBsum" id="5NDG"/>
<dbReference type="PDBsum" id="5NDV"/>
<dbReference type="PDBsum" id="5NDW"/>
<dbReference type="PDBsum" id="5OBM"/>
<dbReference type="PDBsum" id="5ON6"/>
<dbReference type="PDBsum" id="5TBW"/>
<dbReference type="PDBsum" id="5TGA"/>
<dbReference type="PDBsum" id="5TGM"/>
<dbReference type="PDBsum" id="5TZS"/>
<dbReference type="PDBsum" id="5WLC"/>
<dbReference type="PDBsum" id="5WYJ"/>
<dbReference type="PDBsum" id="5WYK"/>
<dbReference type="PDBsum" id="6FAI"/>
<dbReference type="PDBsum" id="6GQ1"/>
<dbReference type="PDBsum" id="6GQB"/>
<dbReference type="PDBsum" id="6GQV"/>
<dbReference type="PDBsum" id="6HHQ"/>
<dbReference type="PDBsum" id="6I7O"/>
<dbReference type="PDBsum" id="6KE6"/>
<dbReference type="PDBsum" id="6LQP"/>
<dbReference type="PDBsum" id="6LQQ"/>
<dbReference type="PDBsum" id="6LQR"/>
<dbReference type="PDBsum" id="6LQS"/>
<dbReference type="PDBsum" id="6LQT"/>
<dbReference type="PDBsum" id="6LQU"/>
<dbReference type="PDBsum" id="6LQV"/>
<dbReference type="PDBsum" id="6Q8Y"/>
<dbReference type="PDBsum" id="6RBD"/>
<dbReference type="PDBsum" id="6RBE"/>
<dbReference type="PDBsum" id="6S47"/>
<dbReference type="PDBsum" id="6T4Q"/>
<dbReference type="PDBsum" id="6TB3"/>
<dbReference type="PDBsum" id="6TNU"/>
<dbReference type="PDBsum" id="6WDR"/>
<dbReference type="PDBsum" id="6WOO"/>
<dbReference type="PDBsum" id="6Y7C"/>
<dbReference type="PDBsum" id="6Z6J"/>
<dbReference type="PDBsum" id="6Z6K"/>
<dbReference type="PDBsum" id="6ZQA"/>
<dbReference type="PDBsum" id="6ZQB"/>
<dbReference type="PDBsum" id="6ZQC"/>
<dbReference type="PDBsum" id="6ZQD"/>
<dbReference type="PDBsum" id="6ZQE"/>
<dbReference type="PDBsum" id="6ZQF"/>
<dbReference type="PDBsum" id="6ZQG"/>
<dbReference type="PDBsum" id="6ZVI"/>
<dbReference type="PDBsum" id="7A1G"/>
<dbReference type="PDBsum" id="7AJT"/>
<dbReference type="PDBsum" id="7AJU"/>
<dbReference type="PDBsum" id="7B7D"/>
<dbReference type="PDBsum" id="7D4I"/>
<dbReference type="PDBsum" id="7D5S"/>
<dbReference type="PDBsum" id="7D5T"/>
<dbReference type="PDBsum" id="7D63"/>
<dbReference type="PDBsum" id="7MPI"/>
<dbReference type="PDBsum" id="7MPJ"/>
<dbReference type="PDBsum" id="7N8B"/>
<dbReference type="PDBsum" id="7NRC"/>
<dbReference type="PDBsum" id="7NRD"/>
<dbReference type="PDBsum" id="7SUK"/>
<dbReference type="PDBsum" id="7ZPQ"/>
<dbReference type="PDBsum" id="7ZRS"/>
<dbReference type="PDBsum" id="7ZUW"/>
<dbReference type="PDBsum" id="7ZUX"/>
<dbReference type="PDBsum" id="7ZW0"/>
<dbReference type="PDBsum" id="8BN3"/>
<dbReference type="PDBsum" id="8BQD"/>
<dbReference type="PDBsum" id="8BQX"/>
<dbReference type="PDBsum" id="8C00"/>
<dbReference type="PDBsum" id="8C01"/>
<dbReference type="PDBsum" id="8CAH"/>
<dbReference type="PDBsum" id="8CAS"/>
<dbReference type="PDBsum" id="8CBJ"/>
<dbReference type="PDBsum" id="8CCS"/>
<dbReference type="PDBsum" id="8CDL"/>
<dbReference type="PDBsum" id="8CDR"/>
<dbReference type="PDBsum" id="8CEH"/>
<dbReference type="PDBsum" id="8CF5"/>
<dbReference type="PDBsum" id="8CG8"/>
<dbReference type="PDBsum" id="8CGN"/>
<dbReference type="PDBsum" id="8CIV"/>
<dbReference type="PDBsum" id="8CKU"/>
<dbReference type="PDBsum" id="8CMJ"/>
<dbReference type="PDBsum" id="8K2D"/>
<dbReference type="PDBsum" id="8K82"/>
<dbReference type="PDBsum" id="8P4V"/>
<dbReference type="PDBsum" id="8P9A"/>
<dbReference type="PDBsum" id="8T2X"/>
<dbReference type="PDBsum" id="8T2Y"/>
<dbReference type="PDBsum" id="8T2Z"/>
<dbReference type="PDBsum" id="8T30"/>
<dbReference type="PDBsum" id="8T3A"/>
<dbReference type="PDBsum" id="8T3B"/>
<dbReference type="PDBsum" id="8T3C"/>
<dbReference type="PDBsum" id="8T3D"/>
<dbReference type="PDBsum" id="8T3E"/>
<dbReference type="PDBsum" id="8T3F"/>
<dbReference type="PDBsum" id="8UT0"/>
<dbReference type="PDBsum" id="8UTI"/>
<dbReference type="PDBsum" id="8XU8"/>
<dbReference type="PDBsum" id="8Y0U"/>
<dbReference type="PDBsum" id="8YLD"/>
<dbReference type="PDBsum" id="8YLR"/>
<dbReference type="PDBsum" id="8Z70"/>
<dbReference type="PDBsum" id="8Z71"/>
<dbReference type="PDBsum" id="9F9S"/>
<dbReference type="EMDB" id="EMD-0949"/>
<dbReference type="EMDB" id="EMD-0950"/>
<dbReference type="EMDB" id="EMD-0951"/>
<dbReference type="EMDB" id="EMD-0952"/>
<dbReference type="EMDB" id="EMD-0953"/>
<dbReference type="EMDB" id="EMD-0954"/>
<dbReference type="EMDB" id="EMD-0955"/>
<dbReference type="EMDB" id="EMD-10377"/>
<dbReference type="EMDB" id="EMD-10397"/>
<dbReference type="EMDB" id="EMD-10431"/>
<dbReference type="EMDB" id="EMD-10537"/>
<dbReference type="EMDB" id="EMD-10713"/>
<dbReference type="EMDB" id="EMD-11096"/>
<dbReference type="EMDB" id="EMD-11097"/>
<dbReference type="EMDB" id="EMD-11357"/>
<dbReference type="EMDB" id="EMD-11358"/>
<dbReference type="EMDB" id="EMD-11359"/>
<dbReference type="EMDB" id="EMD-11360"/>
<dbReference type="EMDB" id="EMD-11361"/>
<dbReference type="EMDB" id="EMD-11362"/>
<dbReference type="EMDB" id="EMD-11363"/>
<dbReference type="EMDB" id="EMD-11608"/>
<dbReference type="EMDB" id="EMD-11807"/>
<dbReference type="EMDB" id="EMD-11808"/>
<dbReference type="EMDB" id="EMD-14979"/>
<dbReference type="EMDB" id="EMD-14990"/>
<dbReference type="EMDB" id="EMD-16347"/>
<dbReference type="EMDB" id="EMD-16349"/>
<dbReference type="EMDB" id="EMD-16533"/>
<dbReference type="EMDB" id="EMD-16541"/>
<dbReference type="EMDB" id="EMD-16563"/>
<dbReference type="EMDB" id="EMD-16591"/>
<dbReference type="EMDB" id="EMD-16594"/>
<dbReference type="EMDB" id="EMD-16609"/>
<dbReference type="EMDB" id="EMD-16616"/>
<dbReference type="EMDB" id="EMD-16634"/>
<dbReference type="EMDB" id="EMD-16648"/>
<dbReference type="EMDB" id="EMD-16684"/>
<dbReference type="EMDB" id="EMD-16702"/>
<dbReference type="EMDB" id="EMD-16729"/>
<dbReference type="EMDB" id="EMD-21644"/>
<dbReference type="EMDB" id="EMD-21859"/>
<dbReference type="EMDB" id="EMD-23934"/>
<dbReference type="EMDB" id="EMD-23935"/>
<dbReference type="EMDB" id="EMD-24235"/>
<dbReference type="EMDB" id="EMD-25441"/>
<dbReference type="EMDB" id="EMD-30574"/>
<dbReference type="EMDB" id="EMD-30584"/>
<dbReference type="EMDB" id="EMD-30585"/>
<dbReference type="EMDB" id="EMD-30588"/>
<dbReference type="EMDB" id="EMD-36839"/>
<dbReference type="EMDB" id="EMD-36945"/>
<dbReference type="EMDB" id="EMD-38660"/>
<dbReference type="EMDB" id="EMD-4214"/>
<dbReference type="EMDB" id="EMD-42525"/>
<dbReference type="EMDB" id="EMD-42540"/>
<dbReference type="EMDB" id="EMD-4427"/>
<dbReference type="EMDB" id="EMD-4474"/>
<dbReference type="EMDB" id="EMD-4792"/>
<dbReference type="EMDB" id="EMD-4793"/>
<dbReference type="EMDB" id="EMD-50259"/>
<dbReference type="EMDB" id="EMD-8473"/>
<dbReference type="EMDB" id="EMD-8859"/>
<dbReference type="EMDB" id="EMD-9964"/>
<dbReference type="SMR" id="Q3E7X9"/>
<dbReference type="BioGRID" id="34563">
    <property type="interactions" value="188"/>
</dbReference>
<dbReference type="ComplexPortal" id="CPX-1599">
    <property type="entry name" value="40S cytosolic small ribosomal subunit"/>
</dbReference>
<dbReference type="DIP" id="DIP-29384N"/>
<dbReference type="FunCoup" id="Q3E7X9">
    <property type="interactions" value="1001"/>
</dbReference>
<dbReference type="IntAct" id="Q3E7X9">
    <property type="interactions" value="37"/>
</dbReference>
<dbReference type="STRING" id="4932.YOR167C"/>
<dbReference type="MoonProt" id="Q3E7X9"/>
<dbReference type="iPTMnet" id="Q3E7X9"/>
<dbReference type="PaxDb" id="4932-YOR167C"/>
<dbReference type="PeptideAtlas" id="Q3E7X9"/>
<dbReference type="TopDownProteomics" id="Q3E7X9"/>
<dbReference type="EnsemblFungi" id="YOR167C_mRNA">
    <property type="protein sequence ID" value="YOR167C"/>
    <property type="gene ID" value="YOR167C"/>
</dbReference>
<dbReference type="GeneID" id="854338"/>
<dbReference type="KEGG" id="sce:YOR167C"/>
<dbReference type="AGR" id="SGD:S000005693"/>
<dbReference type="SGD" id="S000005693">
    <property type="gene designation" value="RPS28A"/>
</dbReference>
<dbReference type="VEuPathDB" id="FungiDB:YOR167C"/>
<dbReference type="eggNOG" id="KOG3502">
    <property type="taxonomic scope" value="Eukaryota"/>
</dbReference>
<dbReference type="GeneTree" id="ENSGT00910000144227"/>
<dbReference type="HOGENOM" id="CLU_178987_1_0_1"/>
<dbReference type="InParanoid" id="Q3E7X9"/>
<dbReference type="OMA" id="SCSIIHN"/>
<dbReference type="OrthoDB" id="10258930at2759"/>
<dbReference type="BioCyc" id="YEAST:G3O-33683-MONOMER"/>
<dbReference type="BioGRID-ORCS" id="854338">
    <property type="hits" value="3 hits in 10 CRISPR screens"/>
</dbReference>
<dbReference type="PRO" id="PR:Q3E7X9"/>
<dbReference type="Proteomes" id="UP000002311">
    <property type="component" value="Chromosome XV"/>
</dbReference>
<dbReference type="RNAct" id="Q3E7X9">
    <property type="molecule type" value="protein"/>
</dbReference>
<dbReference type="GO" id="GO:0005829">
    <property type="term" value="C:cytosol"/>
    <property type="evidence" value="ECO:0000304"/>
    <property type="project" value="Reactome"/>
</dbReference>
<dbReference type="GO" id="GO:0022627">
    <property type="term" value="C:cytosolic small ribosomal subunit"/>
    <property type="evidence" value="ECO:0000314"/>
    <property type="project" value="SGD"/>
</dbReference>
<dbReference type="GO" id="GO:0003735">
    <property type="term" value="F:structural constituent of ribosome"/>
    <property type="evidence" value="ECO:0000314"/>
    <property type="project" value="SGD"/>
</dbReference>
<dbReference type="GO" id="GO:0030490">
    <property type="term" value="P:maturation of SSU-rRNA"/>
    <property type="evidence" value="ECO:0000318"/>
    <property type="project" value="GO_Central"/>
</dbReference>
<dbReference type="GO" id="GO:1900153">
    <property type="term" value="P:positive regulation of nuclear-transcribed mRNA catabolic process, deadenylation-dependent decay"/>
    <property type="evidence" value="ECO:0000315"/>
    <property type="project" value="SGD"/>
</dbReference>
<dbReference type="GO" id="GO:0000028">
    <property type="term" value="P:ribosomal small subunit assembly"/>
    <property type="evidence" value="ECO:0000318"/>
    <property type="project" value="GO_Central"/>
</dbReference>
<dbReference type="GO" id="GO:0000054">
    <property type="term" value="P:ribosomal subunit export from nucleus"/>
    <property type="evidence" value="ECO:0000316"/>
    <property type="project" value="SGD"/>
</dbReference>
<dbReference type="GO" id="GO:0006412">
    <property type="term" value="P:translation"/>
    <property type="evidence" value="ECO:0007669"/>
    <property type="project" value="InterPro"/>
</dbReference>
<dbReference type="CDD" id="cd04457">
    <property type="entry name" value="S1_S28E"/>
    <property type="match status" value="1"/>
</dbReference>
<dbReference type="FunFam" id="2.40.50.140:FF:000025">
    <property type="entry name" value="40S ribosomal protein S28"/>
    <property type="match status" value="1"/>
</dbReference>
<dbReference type="Gene3D" id="2.40.50.140">
    <property type="entry name" value="Nucleic acid-binding proteins"/>
    <property type="match status" value="1"/>
</dbReference>
<dbReference type="HAMAP" id="MF_00292">
    <property type="entry name" value="Ribosomal_eS28"/>
    <property type="match status" value="1"/>
</dbReference>
<dbReference type="InterPro" id="IPR012340">
    <property type="entry name" value="NA-bd_OB-fold"/>
</dbReference>
<dbReference type="InterPro" id="IPR000289">
    <property type="entry name" value="Ribosomal_eS28"/>
</dbReference>
<dbReference type="InterPro" id="IPR028626">
    <property type="entry name" value="Ribosomal_eS28_CS"/>
</dbReference>
<dbReference type="PANTHER" id="PTHR10769">
    <property type="entry name" value="40S RIBOSOMAL PROTEIN S28"/>
    <property type="match status" value="1"/>
</dbReference>
<dbReference type="PANTHER" id="PTHR10769:SF3">
    <property type="entry name" value="SMALL RIBOSOMAL SUBUNIT PROTEIN ES28"/>
    <property type="match status" value="1"/>
</dbReference>
<dbReference type="Pfam" id="PF01200">
    <property type="entry name" value="Ribosomal_S28e"/>
    <property type="match status" value="1"/>
</dbReference>
<dbReference type="SUPFAM" id="SSF50249">
    <property type="entry name" value="Nucleic acid-binding proteins"/>
    <property type="match status" value="1"/>
</dbReference>
<dbReference type="PROSITE" id="PS00961">
    <property type="entry name" value="RIBOSOMAL_S28E"/>
    <property type="match status" value="1"/>
</dbReference>
<protein>
    <recommendedName>
        <fullName evidence="5">Small ribosomal subunit protein eS28A</fullName>
    </recommendedName>
    <alternativeName>
        <fullName evidence="6">40S ribosomal protein S28-A</fullName>
    </alternativeName>
    <alternativeName>
        <fullName>S33</fullName>
    </alternativeName>
    <alternativeName>
        <fullName>YS27</fullName>
    </alternativeName>
</protein>
<comment type="function">
    <text evidence="8">Component of the ribosome, a large ribonucleoprotein complex responsible for the synthesis of proteins in the cell. The small ribosomal subunit (SSU) binds messenger RNAs (mRNAs) and translates the encoded message by selecting cognate aminoacyl-transfer RNA (tRNA) molecules. The large subunit (LSU) contains the ribosomal catalytic site termed the peptidyl transferase center (PTC), which catalyzes the formation of peptide bonds, thereby polymerizing the amino acids delivered by tRNAs into a polypeptide chain. The nascent polypeptides leave the ribosome through a tunnel in the LSU and interact with protein factors that function in enzymatic processing, targeting, and the membrane insertion of nascent chains at the exit of the ribosomal tunnel.</text>
</comment>
<comment type="subunit">
    <text evidence="4 9">Component of the small ribosomal subunit (SSU). Mature yeast ribosomes consist of a small (40S) and a large (60S) subunit. The 40S small subunit contains 1 molecule of ribosomal RNA (18S rRNA) and 33 different proteins (encoded by 57 genes). The large 60S subunit contains 3 rRNA molecules (25S, 5.8S and 5S rRNA) and 46 different proteins (encoded by 81 genes) (PubMed:22096102, PubMed:9559554).</text>
</comment>
<comment type="subcellular location">
    <subcellularLocation>
        <location evidence="2 4">Cytoplasm</location>
    </subcellularLocation>
</comment>
<comment type="PTM">
    <text evidence="1">N-terminally acetylated by acetyltransferase NatB.</text>
</comment>
<comment type="miscellaneous">
    <text evidence="3">Present with 94500 molecules/cell in log phase SD medium.</text>
</comment>
<comment type="miscellaneous">
    <text evidence="7">There are 2 genes for eS28 in yeast.</text>
</comment>
<comment type="similarity">
    <text evidence="7">Belongs to the eukaryotic ribosomal protein eS28 family.</text>
</comment>
<reference key="1">
    <citation type="journal article" date="1983" name="Nucleic Acids Res.">
        <title>Yeast ribosomal protein S33 is encoded by an unsplit gene.</title>
        <authorList>
            <person name="Leer R.J."/>
            <person name="van Raamsdonk-Duin M.M.C."/>
            <person name="Schoppink P.J."/>
            <person name="Cornelissen M.T.E."/>
            <person name="Cohen L.H."/>
            <person name="Mager W.H."/>
            <person name="Planta R.J."/>
        </authorList>
    </citation>
    <scope>NUCLEOTIDE SEQUENCE [GENOMIC DNA]</scope>
</reference>
<reference key="2">
    <citation type="journal article" date="1996" name="Yeast">
        <title>Analysis of a 22,956 bp region on the right arm of Saccharomyces cerevisiae chromosome XV.</title>
        <authorList>
            <person name="Madania A."/>
            <person name="Poch O."/>
            <person name="Tarassov I.A."/>
            <person name="Winsor B."/>
            <person name="Martin R.P."/>
        </authorList>
    </citation>
    <scope>NUCLEOTIDE SEQUENCE [GENOMIC DNA]</scope>
    <source>
        <strain>S288c / FY1678</strain>
    </source>
</reference>
<reference key="3">
    <citation type="journal article" date="1997" name="Nature">
        <title>The nucleotide sequence of Saccharomyces cerevisiae chromosome XV.</title>
        <authorList>
            <person name="Dujon B."/>
            <person name="Albermann K."/>
            <person name="Aldea M."/>
            <person name="Alexandraki D."/>
            <person name="Ansorge W."/>
            <person name="Arino J."/>
            <person name="Benes V."/>
            <person name="Bohn C."/>
            <person name="Bolotin-Fukuhara M."/>
            <person name="Bordonne R."/>
            <person name="Boyer J."/>
            <person name="Camasses A."/>
            <person name="Casamayor A."/>
            <person name="Casas C."/>
            <person name="Cheret G."/>
            <person name="Cziepluch C."/>
            <person name="Daignan-Fornier B."/>
            <person name="Dang V.-D."/>
            <person name="de Haan M."/>
            <person name="Delius H."/>
            <person name="Durand P."/>
            <person name="Fairhead C."/>
            <person name="Feldmann H."/>
            <person name="Gaillon L."/>
            <person name="Galisson F."/>
            <person name="Gamo F.-J."/>
            <person name="Gancedo C."/>
            <person name="Goffeau A."/>
            <person name="Goulding S.E."/>
            <person name="Grivell L.A."/>
            <person name="Habbig B."/>
            <person name="Hand N.J."/>
            <person name="Hani J."/>
            <person name="Hattenhorst U."/>
            <person name="Hebling U."/>
            <person name="Hernando Y."/>
            <person name="Herrero E."/>
            <person name="Heumann K."/>
            <person name="Hiesel R."/>
            <person name="Hilger F."/>
            <person name="Hofmann B."/>
            <person name="Hollenberg C.P."/>
            <person name="Hughes B."/>
            <person name="Jauniaux J.-C."/>
            <person name="Kalogeropoulos A."/>
            <person name="Katsoulou C."/>
            <person name="Kordes E."/>
            <person name="Lafuente M.J."/>
            <person name="Landt O."/>
            <person name="Louis E.J."/>
            <person name="Maarse A.C."/>
            <person name="Madania A."/>
            <person name="Mannhaupt G."/>
            <person name="Marck C."/>
            <person name="Martin R.P."/>
            <person name="Mewes H.-W."/>
            <person name="Michaux G."/>
            <person name="Paces V."/>
            <person name="Parle-McDermott A.G."/>
            <person name="Pearson B.M."/>
            <person name="Perrin A."/>
            <person name="Pettersson B."/>
            <person name="Poch O."/>
            <person name="Pohl T.M."/>
            <person name="Poirey R."/>
            <person name="Portetelle D."/>
            <person name="Pujol A."/>
            <person name="Purnelle B."/>
            <person name="Ramezani Rad M."/>
            <person name="Rechmann S."/>
            <person name="Schwager C."/>
            <person name="Schweizer M."/>
            <person name="Sor F."/>
            <person name="Sterky F."/>
            <person name="Tarassov I.A."/>
            <person name="Teodoru C."/>
            <person name="Tettelin H."/>
            <person name="Thierry A."/>
            <person name="Tobiasch E."/>
            <person name="Tzermia M."/>
            <person name="Uhlen M."/>
            <person name="Unseld M."/>
            <person name="Valens M."/>
            <person name="Vandenbol M."/>
            <person name="Vetter I."/>
            <person name="Vlcek C."/>
            <person name="Voet M."/>
            <person name="Volckaert G."/>
            <person name="Voss H."/>
            <person name="Wambutt R."/>
            <person name="Wedler H."/>
            <person name="Wiemann S."/>
            <person name="Winsor B."/>
            <person name="Wolfe K.H."/>
            <person name="Zollner A."/>
            <person name="Zumstein E."/>
            <person name="Kleine K."/>
        </authorList>
    </citation>
    <scope>NUCLEOTIDE SEQUENCE [LARGE SCALE GENOMIC DNA]</scope>
    <source>
        <strain>ATCC 204508 / S288c</strain>
    </source>
</reference>
<reference key="4">
    <citation type="journal article" date="2014" name="G3 (Bethesda)">
        <title>The reference genome sequence of Saccharomyces cerevisiae: Then and now.</title>
        <authorList>
            <person name="Engel S.R."/>
            <person name="Dietrich F.S."/>
            <person name="Fisk D.G."/>
            <person name="Binkley G."/>
            <person name="Balakrishnan R."/>
            <person name="Costanzo M.C."/>
            <person name="Dwight S.S."/>
            <person name="Hitz B.C."/>
            <person name="Karra K."/>
            <person name="Nash R.S."/>
            <person name="Weng S."/>
            <person name="Wong E.D."/>
            <person name="Lloyd P."/>
            <person name="Skrzypek M.S."/>
            <person name="Miyasato S.R."/>
            <person name="Simison M."/>
            <person name="Cherry J.M."/>
        </authorList>
    </citation>
    <scope>GENOME REANNOTATION</scope>
    <source>
        <strain>ATCC 204508 / S288c</strain>
    </source>
</reference>
<reference key="5">
    <citation type="journal article" date="2007" name="Genome Res.">
        <title>Approaching a complete repository of sequence-verified protein-encoding clones for Saccharomyces cerevisiae.</title>
        <authorList>
            <person name="Hu Y."/>
            <person name="Rolfs A."/>
            <person name="Bhullar B."/>
            <person name="Murthy T.V.S."/>
            <person name="Zhu C."/>
            <person name="Berger M.F."/>
            <person name="Camargo A.A."/>
            <person name="Kelley F."/>
            <person name="McCarron S."/>
            <person name="Jepson D."/>
            <person name="Richardson A."/>
            <person name="Raphael J."/>
            <person name="Moreira D."/>
            <person name="Taycher E."/>
            <person name="Zuo D."/>
            <person name="Mohr S."/>
            <person name="Kane M.F."/>
            <person name="Williamson J."/>
            <person name="Simpson A.J.G."/>
            <person name="Bulyk M.L."/>
            <person name="Harlow E."/>
            <person name="Marsischky G."/>
            <person name="Kolodner R.D."/>
            <person name="LaBaer J."/>
        </authorList>
    </citation>
    <scope>NUCLEOTIDE SEQUENCE [GENOMIC DNA]</scope>
</reference>
<reference key="6">
    <citation type="journal article" date="1998" name="Yeast">
        <title>The list of cytoplasmic ribosomal proteins of Saccharomyces cerevisiae.</title>
        <authorList>
            <person name="Planta R.J."/>
            <person name="Mager W.H."/>
        </authorList>
    </citation>
    <scope>NOMENCLATURE</scope>
    <scope>SUBUNIT</scope>
</reference>
<reference key="7">
    <citation type="journal article" date="1999" name="J. Biol. Chem.">
        <title>The action of N-terminal acetyltransferases on yeast ribosomal proteins.</title>
        <authorList>
            <person name="Arnold R.J."/>
            <person name="Polevoda B."/>
            <person name="Reilly J.P."/>
            <person name="Sherman F."/>
        </authorList>
    </citation>
    <scope>ACETYLATION AT MET-1 BY NATB</scope>
</reference>
<reference key="8">
    <citation type="journal article" date="2003" name="Nature">
        <title>Global analysis of protein localization in budding yeast.</title>
        <authorList>
            <person name="Huh W.-K."/>
            <person name="Falvo J.V."/>
            <person name="Gerke L.C."/>
            <person name="Carroll A.S."/>
            <person name="Howson R.W."/>
            <person name="Weissman J.S."/>
            <person name="O'Shea E.K."/>
        </authorList>
    </citation>
    <scope>SUBCELLULAR LOCATION [LARGE SCALE ANALYSIS]</scope>
</reference>
<reference key="9">
    <citation type="journal article" date="2003" name="Nature">
        <title>Global analysis of protein expression in yeast.</title>
        <authorList>
            <person name="Ghaemmaghami S."/>
            <person name="Huh W.-K."/>
            <person name="Bower K."/>
            <person name="Howson R.W."/>
            <person name="Belle A."/>
            <person name="Dephoure N."/>
            <person name="O'Shea E.K."/>
            <person name="Weissman J.S."/>
        </authorList>
    </citation>
    <scope>LEVEL OF PROTEIN EXPRESSION [LARGE SCALE ANALYSIS]</scope>
</reference>
<reference key="10">
    <citation type="journal article" date="2012" name="Proc. Natl. Acad. Sci. U.S.A.">
        <title>N-terminal acetylome analyses and functional insights of the N-terminal acetyltransferase NatB.</title>
        <authorList>
            <person name="Van Damme P."/>
            <person name="Lasa M."/>
            <person name="Polevoda B."/>
            <person name="Gazquez C."/>
            <person name="Elosegui-Artola A."/>
            <person name="Kim D.S."/>
            <person name="De Juan-Pardo E."/>
            <person name="Demeyer K."/>
            <person name="Hole K."/>
            <person name="Larrea E."/>
            <person name="Timmerman E."/>
            <person name="Prieto J."/>
            <person name="Arnesen T."/>
            <person name="Sherman F."/>
            <person name="Gevaert K."/>
            <person name="Aldabe R."/>
        </authorList>
    </citation>
    <scope>ACETYLATION [LARGE SCALE ANALYSIS] AT MET-1</scope>
    <scope>IDENTIFICATION BY MASS SPECTROMETRY [LARGE SCALE ANALYSIS]</scope>
</reference>
<reference key="11">
    <citation type="journal article" date="2014" name="Curr. Opin. Struct. Biol.">
        <title>A new system for naming ribosomal proteins.</title>
        <authorList>
            <person name="Ban N."/>
            <person name="Beckmann R."/>
            <person name="Cate J.H.D."/>
            <person name="Dinman J.D."/>
            <person name="Dragon F."/>
            <person name="Ellis S.R."/>
            <person name="Lafontaine D.L.J."/>
            <person name="Lindahl L."/>
            <person name="Liljas A."/>
            <person name="Lipton J.M."/>
            <person name="McAlear M.A."/>
            <person name="Moore P.B."/>
            <person name="Noller H.F."/>
            <person name="Ortega J."/>
            <person name="Panse V.G."/>
            <person name="Ramakrishnan V."/>
            <person name="Spahn C.M.T."/>
            <person name="Steitz T.A."/>
            <person name="Tchorzewski M."/>
            <person name="Tollervey D."/>
            <person name="Warren A.J."/>
            <person name="Williamson J.R."/>
            <person name="Wilson D."/>
            <person name="Yonath A."/>
            <person name="Yusupov M."/>
        </authorList>
    </citation>
    <scope>NOMENCLATURE</scope>
</reference>
<reference key="12">
    <citation type="journal article" date="2010" name="Science">
        <title>Crystal structure of the eukaryotic ribosome.</title>
        <authorList>
            <person name="Ben-Shem A."/>
            <person name="Jenner L."/>
            <person name="Yusupova G."/>
            <person name="Yusupov M."/>
        </authorList>
    </citation>
    <scope>X-RAY CRYSTALLOGRAPHY (4.00 ANGSTROMS)</scope>
</reference>
<reference key="13">
    <citation type="journal article" date="2011" name="Science">
        <title>The structure of the eukaryotic ribosome at 3.0 A resolution.</title>
        <authorList>
            <person name="Ben-Shem A."/>
            <person name="Garreau de Loubresse N."/>
            <person name="Melnikov S."/>
            <person name="Jenner L."/>
            <person name="Yusupova G."/>
            <person name="Yusupov M."/>
        </authorList>
    </citation>
    <scope>X-RAY CRYSTALLOGRAPHY (3.00 ANGSTROMS)</scope>
    <scope>SUBUNIT</scope>
    <scope>SUBCELLULAR LOCATION</scope>
</reference>
<proteinExistence type="evidence at protein level"/>
<sequence>MDNKTPVTLAKVIKVLGRTGSRGGVTQVRVEFLEDTSRTIVRNVKGPVRENDILVLMESEREARRLR</sequence>
<feature type="chain" id="PRO_0000136842" description="Small ribosomal subunit protein eS28A">
    <location>
        <begin position="1"/>
        <end position="67"/>
    </location>
</feature>
<feature type="modified residue" description="N-acetylmethionine" evidence="1 10">
    <location>
        <position position="1"/>
    </location>
</feature>
<feature type="strand" evidence="11">
    <location>
        <begin position="8"/>
        <end position="20"/>
    </location>
</feature>
<feature type="strand" evidence="11">
    <location>
        <begin position="25"/>
        <end position="36"/>
    </location>
</feature>
<feature type="strand" evidence="11">
    <location>
        <begin position="40"/>
        <end position="44"/>
    </location>
</feature>
<feature type="strand" evidence="11">
    <location>
        <begin position="53"/>
        <end position="57"/>
    </location>
</feature>
<organism>
    <name type="scientific">Saccharomyces cerevisiae (strain ATCC 204508 / S288c)</name>
    <name type="common">Baker's yeast</name>
    <dbReference type="NCBI Taxonomy" id="559292"/>
    <lineage>
        <taxon>Eukaryota</taxon>
        <taxon>Fungi</taxon>
        <taxon>Dikarya</taxon>
        <taxon>Ascomycota</taxon>
        <taxon>Saccharomycotina</taxon>
        <taxon>Saccharomycetes</taxon>
        <taxon>Saccharomycetales</taxon>
        <taxon>Saccharomycetaceae</taxon>
        <taxon>Saccharomyces</taxon>
    </lineage>
</organism>
<gene>
    <name evidence="6" type="primary">RPS28A</name>
    <name type="synonym">RPS33</name>
    <name type="synonym">RPS33A</name>
    <name type="ordered locus">YOR167C</name>
    <name type="ORF">O3600</name>
</gene>
<name>RS28A_YEAST</name>
<evidence type="ECO:0000269" key="1">
    <source>
    </source>
</evidence>
<evidence type="ECO:0000269" key="2">
    <source>
    </source>
</evidence>
<evidence type="ECO:0000269" key="3">
    <source>
    </source>
</evidence>
<evidence type="ECO:0000269" key="4">
    <source>
    </source>
</evidence>
<evidence type="ECO:0000303" key="5">
    <source>
    </source>
</evidence>
<evidence type="ECO:0000303" key="6">
    <source>
    </source>
</evidence>
<evidence type="ECO:0000305" key="7"/>
<evidence type="ECO:0000305" key="8">
    <source>
    </source>
</evidence>
<evidence type="ECO:0000305" key="9">
    <source>
    </source>
</evidence>
<evidence type="ECO:0007744" key="10">
    <source>
    </source>
</evidence>
<evidence type="ECO:0007829" key="11">
    <source>
        <dbReference type="PDB" id="8C01"/>
    </source>
</evidence>